<dbReference type="EMBL" id="CP000628">
    <property type="protein sequence ID" value="ACM26464.1"/>
    <property type="molecule type" value="Genomic_DNA"/>
</dbReference>
<dbReference type="RefSeq" id="WP_007693413.1">
    <property type="nucleotide sequence ID" value="NC_011985.1"/>
</dbReference>
<dbReference type="SMR" id="B9JEX3"/>
<dbReference type="STRING" id="311403.Arad_2223"/>
<dbReference type="GeneID" id="86848358"/>
<dbReference type="KEGG" id="ara:Arad_2223"/>
<dbReference type="eggNOG" id="COG0233">
    <property type="taxonomic scope" value="Bacteria"/>
</dbReference>
<dbReference type="HOGENOM" id="CLU_073981_2_0_5"/>
<dbReference type="Proteomes" id="UP000001600">
    <property type="component" value="Chromosome 1"/>
</dbReference>
<dbReference type="GO" id="GO:0005829">
    <property type="term" value="C:cytosol"/>
    <property type="evidence" value="ECO:0007669"/>
    <property type="project" value="GOC"/>
</dbReference>
<dbReference type="GO" id="GO:0043023">
    <property type="term" value="F:ribosomal large subunit binding"/>
    <property type="evidence" value="ECO:0007669"/>
    <property type="project" value="TreeGrafter"/>
</dbReference>
<dbReference type="GO" id="GO:0002184">
    <property type="term" value="P:cytoplasmic translational termination"/>
    <property type="evidence" value="ECO:0007669"/>
    <property type="project" value="TreeGrafter"/>
</dbReference>
<dbReference type="CDD" id="cd00520">
    <property type="entry name" value="RRF"/>
    <property type="match status" value="1"/>
</dbReference>
<dbReference type="FunFam" id="1.10.132.20:FF:000001">
    <property type="entry name" value="Ribosome-recycling factor"/>
    <property type="match status" value="1"/>
</dbReference>
<dbReference type="FunFam" id="3.30.1360.40:FF:000001">
    <property type="entry name" value="Ribosome-recycling factor"/>
    <property type="match status" value="1"/>
</dbReference>
<dbReference type="Gene3D" id="3.30.1360.40">
    <property type="match status" value="1"/>
</dbReference>
<dbReference type="Gene3D" id="1.10.132.20">
    <property type="entry name" value="Ribosome-recycling factor"/>
    <property type="match status" value="1"/>
</dbReference>
<dbReference type="HAMAP" id="MF_00040">
    <property type="entry name" value="RRF"/>
    <property type="match status" value="1"/>
</dbReference>
<dbReference type="InterPro" id="IPR002661">
    <property type="entry name" value="Ribosome_recyc_fac"/>
</dbReference>
<dbReference type="InterPro" id="IPR023584">
    <property type="entry name" value="Ribosome_recyc_fac_dom"/>
</dbReference>
<dbReference type="InterPro" id="IPR036191">
    <property type="entry name" value="RRF_sf"/>
</dbReference>
<dbReference type="NCBIfam" id="TIGR00496">
    <property type="entry name" value="frr"/>
    <property type="match status" value="1"/>
</dbReference>
<dbReference type="PANTHER" id="PTHR20982:SF3">
    <property type="entry name" value="MITOCHONDRIAL RIBOSOME RECYCLING FACTOR PSEUDO 1"/>
    <property type="match status" value="1"/>
</dbReference>
<dbReference type="PANTHER" id="PTHR20982">
    <property type="entry name" value="RIBOSOME RECYCLING FACTOR"/>
    <property type="match status" value="1"/>
</dbReference>
<dbReference type="Pfam" id="PF01765">
    <property type="entry name" value="RRF"/>
    <property type="match status" value="1"/>
</dbReference>
<dbReference type="SUPFAM" id="SSF55194">
    <property type="entry name" value="Ribosome recycling factor, RRF"/>
    <property type="match status" value="1"/>
</dbReference>
<sequence>MSEGTDLKELKRRMDGAIAAFKSDIASLRTGRASANILDPVTIEAYGSRMPLNQVANITVPEPRMLSVSVWDKSMVGAVERGIRESNLGLNPIIDGQNLRIPLPELNEERRRSLVKVAHEYAEKAKVAIRHVRRDGMDGLKKAEKDGDIGQDEGRSLSERVQKMTDETISDIDRLLVDKEKEIMQV</sequence>
<feature type="chain" id="PRO_1000194887" description="Ribosome-recycling factor">
    <location>
        <begin position="1"/>
        <end position="186"/>
    </location>
</feature>
<feature type="region of interest" description="Disordered" evidence="2">
    <location>
        <begin position="140"/>
        <end position="163"/>
    </location>
</feature>
<protein>
    <recommendedName>
        <fullName evidence="1">Ribosome-recycling factor</fullName>
        <shortName evidence="1">RRF</shortName>
    </recommendedName>
    <alternativeName>
        <fullName evidence="1">Ribosome-releasing factor</fullName>
    </alternativeName>
</protein>
<gene>
    <name evidence="1" type="primary">frr</name>
    <name type="ordered locus">Arad_2223</name>
</gene>
<organism>
    <name type="scientific">Rhizobium rhizogenes (strain K84 / ATCC BAA-868)</name>
    <name type="common">Agrobacterium radiobacter</name>
    <dbReference type="NCBI Taxonomy" id="311403"/>
    <lineage>
        <taxon>Bacteria</taxon>
        <taxon>Pseudomonadati</taxon>
        <taxon>Pseudomonadota</taxon>
        <taxon>Alphaproteobacteria</taxon>
        <taxon>Hyphomicrobiales</taxon>
        <taxon>Rhizobiaceae</taxon>
        <taxon>Rhizobium/Agrobacterium group</taxon>
        <taxon>Rhizobium</taxon>
    </lineage>
</organism>
<proteinExistence type="inferred from homology"/>
<reference key="1">
    <citation type="journal article" date="2009" name="J. Bacteriol.">
        <title>Genome sequences of three Agrobacterium biovars help elucidate the evolution of multichromosome genomes in bacteria.</title>
        <authorList>
            <person name="Slater S.C."/>
            <person name="Goldman B.S."/>
            <person name="Goodner B."/>
            <person name="Setubal J.C."/>
            <person name="Farrand S.K."/>
            <person name="Nester E.W."/>
            <person name="Burr T.J."/>
            <person name="Banta L."/>
            <person name="Dickerman A.W."/>
            <person name="Paulsen I."/>
            <person name="Otten L."/>
            <person name="Suen G."/>
            <person name="Welch R."/>
            <person name="Almeida N.F."/>
            <person name="Arnold F."/>
            <person name="Burton O.T."/>
            <person name="Du Z."/>
            <person name="Ewing A."/>
            <person name="Godsy E."/>
            <person name="Heisel S."/>
            <person name="Houmiel K.L."/>
            <person name="Jhaveri J."/>
            <person name="Lu J."/>
            <person name="Miller N.M."/>
            <person name="Norton S."/>
            <person name="Chen Q."/>
            <person name="Phoolcharoen W."/>
            <person name="Ohlin V."/>
            <person name="Ondrusek D."/>
            <person name="Pride N."/>
            <person name="Stricklin S.L."/>
            <person name="Sun J."/>
            <person name="Wheeler C."/>
            <person name="Wilson L."/>
            <person name="Zhu H."/>
            <person name="Wood D.W."/>
        </authorList>
    </citation>
    <scope>NUCLEOTIDE SEQUENCE [LARGE SCALE GENOMIC DNA]</scope>
    <source>
        <strain>K84 / ATCC BAA-868</strain>
    </source>
</reference>
<evidence type="ECO:0000255" key="1">
    <source>
        <dbReference type="HAMAP-Rule" id="MF_00040"/>
    </source>
</evidence>
<evidence type="ECO:0000256" key="2">
    <source>
        <dbReference type="SAM" id="MobiDB-lite"/>
    </source>
</evidence>
<keyword id="KW-0963">Cytoplasm</keyword>
<keyword id="KW-0648">Protein biosynthesis</keyword>
<accession>B9JEX3</accession>
<name>RRF_RHIR8</name>
<comment type="function">
    <text evidence="1">Responsible for the release of ribosomes from messenger RNA at the termination of protein biosynthesis. May increase the efficiency of translation by recycling ribosomes from one round of translation to another.</text>
</comment>
<comment type="subcellular location">
    <subcellularLocation>
        <location evidence="1">Cytoplasm</location>
    </subcellularLocation>
</comment>
<comment type="similarity">
    <text evidence="1">Belongs to the RRF family.</text>
</comment>